<protein>
    <recommendedName>
        <fullName>Ubiquitin-fold modifier-conjugating enzyme 1</fullName>
    </recommendedName>
    <alternativeName>
        <fullName>Ufm1-conjugating enzyme 1</fullName>
    </alternativeName>
</protein>
<keyword id="KW-1185">Reference proteome</keyword>
<keyword id="KW-0833">Ubl conjugation pathway</keyword>
<dbReference type="EMBL" id="CM000362">
    <property type="protein sequence ID" value="EDX07281.1"/>
    <property type="molecule type" value="Genomic_DNA"/>
</dbReference>
<dbReference type="SMR" id="B4QHD6"/>
<dbReference type="STRING" id="7240.B4QHD6"/>
<dbReference type="EnsemblMetazoa" id="FBtr0225486">
    <property type="protein sequence ID" value="FBpp0223978"/>
    <property type="gene ID" value="FBgn0196862"/>
</dbReference>
<dbReference type="EnsemblMetazoa" id="XM_002081660.4">
    <property type="protein sequence ID" value="XP_002081696.1"/>
    <property type="gene ID" value="LOC6734689"/>
</dbReference>
<dbReference type="GeneID" id="6734689"/>
<dbReference type="CTD" id="51506"/>
<dbReference type="HOGENOM" id="CLU_101170_0_0_1"/>
<dbReference type="OMA" id="LWQKNVP"/>
<dbReference type="OrthoDB" id="10256182at2759"/>
<dbReference type="PhylomeDB" id="B4QHD6"/>
<dbReference type="Proteomes" id="UP000000304">
    <property type="component" value="Chromosome 2R"/>
</dbReference>
<dbReference type="Bgee" id="FBgn0196862">
    <property type="expression patterns" value="Expressed in embryo and 3 other cell types or tissues"/>
</dbReference>
<dbReference type="GO" id="GO:0005737">
    <property type="term" value="C:cytoplasm"/>
    <property type="evidence" value="ECO:0007669"/>
    <property type="project" value="TreeGrafter"/>
</dbReference>
<dbReference type="GO" id="GO:0061657">
    <property type="term" value="F:UFM1 conjugating enzyme activity"/>
    <property type="evidence" value="ECO:0007669"/>
    <property type="project" value="InterPro"/>
</dbReference>
<dbReference type="GO" id="GO:1990592">
    <property type="term" value="P:protein K69-linked ufmylation"/>
    <property type="evidence" value="ECO:0007669"/>
    <property type="project" value="TreeGrafter"/>
</dbReference>
<dbReference type="CDD" id="cd11686">
    <property type="entry name" value="UBCc_UFC1"/>
    <property type="match status" value="1"/>
</dbReference>
<dbReference type="FunFam" id="3.10.110.10:FF:000042">
    <property type="entry name" value="Ubiquitin-fold modifier-conjugating enzyme 1"/>
    <property type="match status" value="1"/>
</dbReference>
<dbReference type="Gene3D" id="3.10.110.10">
    <property type="entry name" value="Ubiquitin Conjugating Enzyme"/>
    <property type="match status" value="1"/>
</dbReference>
<dbReference type="InterPro" id="IPR016135">
    <property type="entry name" value="UBQ-conjugating_enzyme/RWD"/>
</dbReference>
<dbReference type="InterPro" id="IPR014806">
    <property type="entry name" value="Ufc1"/>
</dbReference>
<dbReference type="PANTHER" id="PTHR12921">
    <property type="entry name" value="UBIQUITIN-FOLD MODIFIER-CONJUGATING ENZYME 1"/>
    <property type="match status" value="1"/>
</dbReference>
<dbReference type="PANTHER" id="PTHR12921:SF0">
    <property type="entry name" value="UBIQUITIN-FOLD MODIFIER-CONJUGATING ENZYME 1"/>
    <property type="match status" value="1"/>
</dbReference>
<dbReference type="Pfam" id="PF08694">
    <property type="entry name" value="UFC1"/>
    <property type="match status" value="1"/>
</dbReference>
<dbReference type="PIRSF" id="PIRSF008716">
    <property type="entry name" value="DUF1782"/>
    <property type="match status" value="1"/>
</dbReference>
<dbReference type="SUPFAM" id="SSF54495">
    <property type="entry name" value="UBC-like"/>
    <property type="match status" value="1"/>
</dbReference>
<proteinExistence type="inferred from homology"/>
<sequence length="164" mass="19018">MVDDSTRKTLSNIPLLQIRAGPREKDVWVQRLKEEYQALIKYVENNKQSGSDWFRLESNKEGTKWFGKCWYMHNLLKYEFEVEFDIPVTYPTTAPEIALPELDGKTAKMYRGGKICLTDHFKPLWARNVPKFGIAHAMALGLAPWLAVEIPDLIEKGIITYKEK</sequence>
<comment type="function">
    <text evidence="1">E2-like enzyme which forms an intermediate with UFM1 via a thioester linkage.</text>
</comment>
<comment type="similarity">
    <text evidence="2">Belongs to the ubiquitin-conjugating enzyme family. UFC1 subfamily.</text>
</comment>
<reference key="1">
    <citation type="journal article" date="2007" name="Nature">
        <title>Evolution of genes and genomes on the Drosophila phylogeny.</title>
        <authorList>
            <consortium name="Drosophila 12 genomes consortium"/>
        </authorList>
    </citation>
    <scope>NUCLEOTIDE SEQUENCE [LARGE SCALE GENOMIC DNA]</scope>
</reference>
<evidence type="ECO:0000250" key="1"/>
<evidence type="ECO:0000305" key="2"/>
<feature type="chain" id="PRO_0000391975" description="Ubiquitin-fold modifier-conjugating enzyme 1">
    <location>
        <begin position="1"/>
        <end position="164"/>
    </location>
</feature>
<feature type="active site" description="Glycyl thioester intermediate" evidence="1">
    <location>
        <position position="116"/>
    </location>
</feature>
<gene>
    <name type="ORF">GD25576</name>
</gene>
<accession>B4QHD6</accession>
<organism>
    <name type="scientific">Drosophila simulans</name>
    <name type="common">Fruit fly</name>
    <dbReference type="NCBI Taxonomy" id="7240"/>
    <lineage>
        <taxon>Eukaryota</taxon>
        <taxon>Metazoa</taxon>
        <taxon>Ecdysozoa</taxon>
        <taxon>Arthropoda</taxon>
        <taxon>Hexapoda</taxon>
        <taxon>Insecta</taxon>
        <taxon>Pterygota</taxon>
        <taxon>Neoptera</taxon>
        <taxon>Endopterygota</taxon>
        <taxon>Diptera</taxon>
        <taxon>Brachycera</taxon>
        <taxon>Muscomorpha</taxon>
        <taxon>Ephydroidea</taxon>
        <taxon>Drosophilidae</taxon>
        <taxon>Drosophila</taxon>
        <taxon>Sophophora</taxon>
    </lineage>
</organism>
<name>UFC1_DROSI</name>